<comment type="function">
    <text evidence="1">F-actin-capping proteins bind in a Ca(2+)-independent manner to the fast growing ends of actin filaments (barbed end) thereby blocking the exchange of subunits at these ends. Unlike other capping proteins (such as gelsolin and severin), these proteins do not sever actin filaments (By similarity).</text>
</comment>
<comment type="subunit">
    <text evidence="1">Heterodimer of an alpha and a beta subunit.</text>
</comment>
<comment type="similarity">
    <text evidence="2">Belongs to the F-actin-capping protein alpha subunit family.</text>
</comment>
<evidence type="ECO:0000250" key="1"/>
<evidence type="ECO:0000305" key="2"/>
<feature type="chain" id="PRO_0000208642" description="F-actin-capping protein subunit alpha">
    <location>
        <begin position="1"/>
        <end position="262"/>
    </location>
</feature>
<name>CAPZA_CANGA</name>
<reference key="1">
    <citation type="journal article" date="2004" name="Nature">
        <title>Genome evolution in yeasts.</title>
        <authorList>
            <person name="Dujon B."/>
            <person name="Sherman D."/>
            <person name="Fischer G."/>
            <person name="Durrens P."/>
            <person name="Casaregola S."/>
            <person name="Lafontaine I."/>
            <person name="de Montigny J."/>
            <person name="Marck C."/>
            <person name="Neuveglise C."/>
            <person name="Talla E."/>
            <person name="Goffard N."/>
            <person name="Frangeul L."/>
            <person name="Aigle M."/>
            <person name="Anthouard V."/>
            <person name="Babour A."/>
            <person name="Barbe V."/>
            <person name="Barnay S."/>
            <person name="Blanchin S."/>
            <person name="Beckerich J.-M."/>
            <person name="Beyne E."/>
            <person name="Bleykasten C."/>
            <person name="Boisrame A."/>
            <person name="Boyer J."/>
            <person name="Cattolico L."/>
            <person name="Confanioleri F."/>
            <person name="de Daruvar A."/>
            <person name="Despons L."/>
            <person name="Fabre E."/>
            <person name="Fairhead C."/>
            <person name="Ferry-Dumazet H."/>
            <person name="Groppi A."/>
            <person name="Hantraye F."/>
            <person name="Hennequin C."/>
            <person name="Jauniaux N."/>
            <person name="Joyet P."/>
            <person name="Kachouri R."/>
            <person name="Kerrest A."/>
            <person name="Koszul R."/>
            <person name="Lemaire M."/>
            <person name="Lesur I."/>
            <person name="Ma L."/>
            <person name="Muller H."/>
            <person name="Nicaud J.-M."/>
            <person name="Nikolski M."/>
            <person name="Oztas S."/>
            <person name="Ozier-Kalogeropoulos O."/>
            <person name="Pellenz S."/>
            <person name="Potier S."/>
            <person name="Richard G.-F."/>
            <person name="Straub M.-L."/>
            <person name="Suleau A."/>
            <person name="Swennen D."/>
            <person name="Tekaia F."/>
            <person name="Wesolowski-Louvel M."/>
            <person name="Westhof E."/>
            <person name="Wirth B."/>
            <person name="Zeniou-Meyer M."/>
            <person name="Zivanovic Y."/>
            <person name="Bolotin-Fukuhara M."/>
            <person name="Thierry A."/>
            <person name="Bouchier C."/>
            <person name="Caudron B."/>
            <person name="Scarpelli C."/>
            <person name="Gaillardin C."/>
            <person name="Weissenbach J."/>
            <person name="Wincker P."/>
            <person name="Souciet J.-L."/>
        </authorList>
    </citation>
    <scope>NUCLEOTIDE SEQUENCE [LARGE SCALE GENOMIC DNA]</scope>
    <source>
        <strain>ATCC 2001 / BCRC 20586 / JCM 3761 / NBRC 0622 / NRRL Y-65 / CBS 138</strain>
    </source>
</reference>
<protein>
    <recommendedName>
        <fullName>F-actin-capping protein subunit alpha</fullName>
    </recommendedName>
</protein>
<proteinExistence type="inferred from homology"/>
<dbReference type="EMBL" id="CR380957">
    <property type="protein sequence ID" value="CAG61307.1"/>
    <property type="molecule type" value="Genomic_DNA"/>
</dbReference>
<dbReference type="RefSeq" id="XP_448346.1">
    <property type="nucleotide sequence ID" value="XM_448346.1"/>
</dbReference>
<dbReference type="SMR" id="Q6FN48"/>
<dbReference type="FunCoup" id="Q6FN48">
    <property type="interactions" value="876"/>
</dbReference>
<dbReference type="STRING" id="284593.Q6FN48"/>
<dbReference type="EnsemblFungi" id="CAGL0K02783g-T">
    <property type="protein sequence ID" value="CAGL0K02783g-T-p1"/>
    <property type="gene ID" value="CAGL0K02783g"/>
</dbReference>
<dbReference type="KEGG" id="cgr:2890272"/>
<dbReference type="CGD" id="CAL0134955">
    <property type="gene designation" value="CAGL0K02783g"/>
</dbReference>
<dbReference type="VEuPathDB" id="FungiDB:B1J91_K02783g"/>
<dbReference type="VEuPathDB" id="FungiDB:CAGL0K02783g"/>
<dbReference type="eggNOG" id="KOG0836">
    <property type="taxonomic scope" value="Eukaryota"/>
</dbReference>
<dbReference type="HOGENOM" id="CLU_045161_3_0_1"/>
<dbReference type="InParanoid" id="Q6FN48"/>
<dbReference type="OMA" id="VACIEDH"/>
<dbReference type="Proteomes" id="UP000002428">
    <property type="component" value="Chromosome K"/>
</dbReference>
<dbReference type="GO" id="GO:0030479">
    <property type="term" value="C:actin cortical patch"/>
    <property type="evidence" value="ECO:0007669"/>
    <property type="project" value="EnsemblFungi"/>
</dbReference>
<dbReference type="GO" id="GO:0005934">
    <property type="term" value="C:cellular bud tip"/>
    <property type="evidence" value="ECO:0007669"/>
    <property type="project" value="EnsemblFungi"/>
</dbReference>
<dbReference type="GO" id="GO:0008290">
    <property type="term" value="C:F-actin capping protein complex"/>
    <property type="evidence" value="ECO:0007669"/>
    <property type="project" value="EnsemblFungi"/>
</dbReference>
<dbReference type="GO" id="GO:0000131">
    <property type="term" value="C:incipient cellular bud site"/>
    <property type="evidence" value="ECO:0007669"/>
    <property type="project" value="EnsemblFungi"/>
</dbReference>
<dbReference type="GO" id="GO:0110085">
    <property type="term" value="C:mitotic actomyosin contractile ring"/>
    <property type="evidence" value="ECO:0007669"/>
    <property type="project" value="EnsemblFungi"/>
</dbReference>
<dbReference type="GO" id="GO:0051015">
    <property type="term" value="F:actin filament binding"/>
    <property type="evidence" value="ECO:0007669"/>
    <property type="project" value="EnsemblFungi"/>
</dbReference>
<dbReference type="GO" id="GO:0030036">
    <property type="term" value="P:actin cytoskeleton organization"/>
    <property type="evidence" value="ECO:0007669"/>
    <property type="project" value="TreeGrafter"/>
</dbReference>
<dbReference type="GO" id="GO:0051016">
    <property type="term" value="P:barbed-end actin filament capping"/>
    <property type="evidence" value="ECO:0007669"/>
    <property type="project" value="EnsemblFungi"/>
</dbReference>
<dbReference type="Gene3D" id="3.30.1140.60">
    <property type="entry name" value="F-actin capping protein, alpha subunit"/>
    <property type="match status" value="1"/>
</dbReference>
<dbReference type="Gene3D" id="3.90.1150.210">
    <property type="entry name" value="F-actin capping protein, beta subunit"/>
    <property type="match status" value="1"/>
</dbReference>
<dbReference type="InterPro" id="IPR002189">
    <property type="entry name" value="CapZ_alpha"/>
</dbReference>
<dbReference type="InterPro" id="IPR037282">
    <property type="entry name" value="CapZ_alpha/beta"/>
</dbReference>
<dbReference type="InterPro" id="IPR042276">
    <property type="entry name" value="CapZ_alpha/beta_2"/>
</dbReference>
<dbReference type="InterPro" id="IPR042489">
    <property type="entry name" value="CapZ_alpha_1"/>
</dbReference>
<dbReference type="InterPro" id="IPR017865">
    <property type="entry name" value="F-actin_cap_asu_CS"/>
</dbReference>
<dbReference type="PANTHER" id="PTHR10653">
    <property type="entry name" value="F-ACTIN-CAPPING PROTEIN SUBUNIT ALPHA"/>
    <property type="match status" value="1"/>
</dbReference>
<dbReference type="PANTHER" id="PTHR10653:SF0">
    <property type="entry name" value="F-ACTIN-CAPPING PROTEIN SUBUNIT ALPHA"/>
    <property type="match status" value="1"/>
</dbReference>
<dbReference type="Pfam" id="PF01267">
    <property type="entry name" value="F-actin_cap_A"/>
    <property type="match status" value="1"/>
</dbReference>
<dbReference type="PRINTS" id="PR00191">
    <property type="entry name" value="FACTINCAPA"/>
</dbReference>
<dbReference type="SUPFAM" id="SSF90096">
    <property type="entry name" value="Subunits of heterodimeric actin filament capping protein Capz"/>
    <property type="match status" value="1"/>
</dbReference>
<dbReference type="PROSITE" id="PS00748">
    <property type="entry name" value="F_ACTIN_CAPPING_A_1"/>
    <property type="match status" value="1"/>
</dbReference>
<dbReference type="PROSITE" id="PS00749">
    <property type="entry name" value="F_ACTIN_CAPPING_A_2"/>
    <property type="match status" value="1"/>
</dbReference>
<organism>
    <name type="scientific">Candida glabrata (strain ATCC 2001 / BCRC 20586 / JCM 3761 / NBRC 0622 / NRRL Y-65 / CBS 138)</name>
    <name type="common">Yeast</name>
    <name type="synonym">Nakaseomyces glabratus</name>
    <dbReference type="NCBI Taxonomy" id="284593"/>
    <lineage>
        <taxon>Eukaryota</taxon>
        <taxon>Fungi</taxon>
        <taxon>Dikarya</taxon>
        <taxon>Ascomycota</taxon>
        <taxon>Saccharomycotina</taxon>
        <taxon>Saccharomycetes</taxon>
        <taxon>Saccharomycetales</taxon>
        <taxon>Saccharomycetaceae</taxon>
        <taxon>Nakaseomyces</taxon>
    </lineage>
</organism>
<accession>Q6FN48</accession>
<sequence>MSNDFDTIIKNIIKDSPAGELEEVYQDLITIAGENSKETIIDAIAEYNVENSIPIDVDGKDVIISKYNKQGTKFVDPVNGIQFSVDHLHQKGLDVEEYSADIDADQKKAITDLGNYLSTNFPGRATFAVLPLEEQSKTAIIIVSTKYNPSNFWNGHWKSEYVYDKTEGKLSGTIDIDVHYYEDGNVKFHSSKLVEETNIKDPVASIKELEHKFEQDLQESFTDLNEKQFKSLRRRLPITRARVNWGKAIGNYRLGRDAAQGK</sequence>
<gene>
    <name type="primary">CAP1</name>
    <name type="ordered locus">CAGL0K02783g</name>
</gene>
<keyword id="KW-0117">Actin capping</keyword>
<keyword id="KW-0009">Actin-binding</keyword>
<keyword id="KW-1185">Reference proteome</keyword>